<comment type="function">
    <text evidence="1">Binds directly to 23S ribosomal RNA and is necessary for the in vitro assembly process of the 50S ribosomal subunit. It is not involved in the protein synthesizing functions of that subunit.</text>
</comment>
<comment type="similarity">
    <text evidence="1">Belongs to the bacterial ribosomal protein bL20 family.</text>
</comment>
<evidence type="ECO:0000255" key="1">
    <source>
        <dbReference type="HAMAP-Rule" id="MF_00382"/>
    </source>
</evidence>
<evidence type="ECO:0000305" key="2"/>
<proteinExistence type="inferred from homology"/>
<keyword id="KW-1185">Reference proteome</keyword>
<keyword id="KW-0687">Ribonucleoprotein</keyword>
<keyword id="KW-0689">Ribosomal protein</keyword>
<keyword id="KW-0694">RNA-binding</keyword>
<keyword id="KW-0699">rRNA-binding</keyword>
<gene>
    <name evidence="1" type="primary">rplT</name>
    <name type="ordered locus">SYNAS_06550</name>
    <name type="ORF">SYN_01720</name>
</gene>
<sequence length="119" mass="13715">MSRVKRSVTAKKKRRKIFKLAKGFFGARSRLLRTATEAVNRALNYAFRDRRVRKREFRKLWIARINAASRAQGLTYSRLIDGLRKSHVEIDRKVLADIAVNDPRGFSEIVLLAKGETVS</sequence>
<name>RL20_SYNAS</name>
<feature type="chain" id="PRO_0000243751" description="Large ribosomal subunit protein bL20">
    <location>
        <begin position="1"/>
        <end position="119"/>
    </location>
</feature>
<dbReference type="EMBL" id="CP000252">
    <property type="protein sequence ID" value="ABC76534.1"/>
    <property type="molecule type" value="Genomic_DNA"/>
</dbReference>
<dbReference type="RefSeq" id="WP_011416568.1">
    <property type="nucleotide sequence ID" value="NC_007759.1"/>
</dbReference>
<dbReference type="SMR" id="Q2LR24"/>
<dbReference type="FunCoup" id="Q2LR24">
    <property type="interactions" value="532"/>
</dbReference>
<dbReference type="STRING" id="56780.SYN_01720"/>
<dbReference type="KEGG" id="sat:SYN_01720"/>
<dbReference type="eggNOG" id="COG0292">
    <property type="taxonomic scope" value="Bacteria"/>
</dbReference>
<dbReference type="HOGENOM" id="CLU_123265_0_1_7"/>
<dbReference type="InParanoid" id="Q2LR24"/>
<dbReference type="OrthoDB" id="9808966at2"/>
<dbReference type="Proteomes" id="UP000001933">
    <property type="component" value="Chromosome"/>
</dbReference>
<dbReference type="GO" id="GO:1990904">
    <property type="term" value="C:ribonucleoprotein complex"/>
    <property type="evidence" value="ECO:0007669"/>
    <property type="project" value="UniProtKB-KW"/>
</dbReference>
<dbReference type="GO" id="GO:0005840">
    <property type="term" value="C:ribosome"/>
    <property type="evidence" value="ECO:0007669"/>
    <property type="project" value="UniProtKB-KW"/>
</dbReference>
<dbReference type="GO" id="GO:0019843">
    <property type="term" value="F:rRNA binding"/>
    <property type="evidence" value="ECO:0007669"/>
    <property type="project" value="UniProtKB-UniRule"/>
</dbReference>
<dbReference type="GO" id="GO:0003735">
    <property type="term" value="F:structural constituent of ribosome"/>
    <property type="evidence" value="ECO:0007669"/>
    <property type="project" value="InterPro"/>
</dbReference>
<dbReference type="GO" id="GO:0000027">
    <property type="term" value="P:ribosomal large subunit assembly"/>
    <property type="evidence" value="ECO:0007669"/>
    <property type="project" value="UniProtKB-UniRule"/>
</dbReference>
<dbReference type="GO" id="GO:0006412">
    <property type="term" value="P:translation"/>
    <property type="evidence" value="ECO:0007669"/>
    <property type="project" value="InterPro"/>
</dbReference>
<dbReference type="CDD" id="cd07026">
    <property type="entry name" value="Ribosomal_L20"/>
    <property type="match status" value="1"/>
</dbReference>
<dbReference type="FunFam" id="1.10.1900.20:FF:000001">
    <property type="entry name" value="50S ribosomal protein L20"/>
    <property type="match status" value="1"/>
</dbReference>
<dbReference type="Gene3D" id="6.10.160.10">
    <property type="match status" value="1"/>
</dbReference>
<dbReference type="Gene3D" id="1.10.1900.20">
    <property type="entry name" value="Ribosomal protein L20"/>
    <property type="match status" value="1"/>
</dbReference>
<dbReference type="HAMAP" id="MF_00382">
    <property type="entry name" value="Ribosomal_bL20"/>
    <property type="match status" value="1"/>
</dbReference>
<dbReference type="InterPro" id="IPR005813">
    <property type="entry name" value="Ribosomal_bL20"/>
</dbReference>
<dbReference type="InterPro" id="IPR049946">
    <property type="entry name" value="RIBOSOMAL_L20_CS"/>
</dbReference>
<dbReference type="InterPro" id="IPR035566">
    <property type="entry name" value="Ribosomal_protein_bL20_C"/>
</dbReference>
<dbReference type="NCBIfam" id="TIGR01032">
    <property type="entry name" value="rplT_bact"/>
    <property type="match status" value="1"/>
</dbReference>
<dbReference type="PANTHER" id="PTHR10986">
    <property type="entry name" value="39S RIBOSOMAL PROTEIN L20"/>
    <property type="match status" value="1"/>
</dbReference>
<dbReference type="Pfam" id="PF00453">
    <property type="entry name" value="Ribosomal_L20"/>
    <property type="match status" value="1"/>
</dbReference>
<dbReference type="PRINTS" id="PR00062">
    <property type="entry name" value="RIBOSOMALL20"/>
</dbReference>
<dbReference type="SUPFAM" id="SSF74731">
    <property type="entry name" value="Ribosomal protein L20"/>
    <property type="match status" value="1"/>
</dbReference>
<dbReference type="PROSITE" id="PS00937">
    <property type="entry name" value="RIBOSOMAL_L20"/>
    <property type="match status" value="1"/>
</dbReference>
<organism>
    <name type="scientific">Syntrophus aciditrophicus (strain SB)</name>
    <dbReference type="NCBI Taxonomy" id="56780"/>
    <lineage>
        <taxon>Bacteria</taxon>
        <taxon>Pseudomonadati</taxon>
        <taxon>Thermodesulfobacteriota</taxon>
        <taxon>Syntrophia</taxon>
        <taxon>Syntrophales</taxon>
        <taxon>Syntrophaceae</taxon>
        <taxon>Syntrophus</taxon>
    </lineage>
</organism>
<accession>Q2LR24</accession>
<reference key="1">
    <citation type="journal article" date="2007" name="Proc. Natl. Acad. Sci. U.S.A.">
        <title>The genome of Syntrophus aciditrophicus: life at the thermodynamic limit of microbial growth.</title>
        <authorList>
            <person name="McInerney M.J."/>
            <person name="Rohlin L."/>
            <person name="Mouttaki H."/>
            <person name="Kim U."/>
            <person name="Krupp R.S."/>
            <person name="Rios-Hernandez L."/>
            <person name="Sieber J."/>
            <person name="Struchtemeyer C.G."/>
            <person name="Bhattacharyya A."/>
            <person name="Campbell J.W."/>
            <person name="Gunsalus R.P."/>
        </authorList>
    </citation>
    <scope>NUCLEOTIDE SEQUENCE [LARGE SCALE GENOMIC DNA]</scope>
    <source>
        <strain>SB</strain>
    </source>
</reference>
<protein>
    <recommendedName>
        <fullName evidence="1">Large ribosomal subunit protein bL20</fullName>
    </recommendedName>
    <alternativeName>
        <fullName evidence="2">50S ribosomal protein L20</fullName>
    </alternativeName>
</protein>